<organism>
    <name type="scientific">Picrophilus torridus (strain ATCC 700027 / DSM 9790 / JCM 10055 / NBRC 100828 / KAW 2/3)</name>
    <dbReference type="NCBI Taxonomy" id="1122961"/>
    <lineage>
        <taxon>Archaea</taxon>
        <taxon>Methanobacteriati</taxon>
        <taxon>Thermoplasmatota</taxon>
        <taxon>Thermoplasmata</taxon>
        <taxon>Thermoplasmatales</taxon>
        <taxon>Picrophilaceae</taxon>
        <taxon>Picrophilus</taxon>
    </lineage>
</organism>
<reference key="1">
    <citation type="journal article" date="2004" name="Proc. Natl. Acad. Sci. U.S.A.">
        <title>Genome sequence of Picrophilus torridus and its implications for life around pH 0.</title>
        <authorList>
            <person name="Fuetterer O."/>
            <person name="Angelov A."/>
            <person name="Liesegang H."/>
            <person name="Gottschalk G."/>
            <person name="Schleper C."/>
            <person name="Schepers B."/>
            <person name="Dock C."/>
            <person name="Antranikian G."/>
            <person name="Liebl W."/>
        </authorList>
    </citation>
    <scope>NUCLEOTIDE SEQUENCE [LARGE SCALE GENOMIC DNA]</scope>
    <source>
        <strain>ATCC 700027 / DSM 9790 / JCM 10055 / NBRC 100828 / KAW 2/3</strain>
    </source>
</reference>
<accession>Q6L2K9</accession>
<protein>
    <recommendedName>
        <fullName evidence="1">Orotate phosphoribosyltransferase</fullName>
        <shortName evidence="1">OPRT</shortName>
        <shortName evidence="1">OPRTase</shortName>
        <ecNumber evidence="1">2.4.2.10</ecNumber>
    </recommendedName>
</protein>
<name>PYRE_PICTO</name>
<comment type="function">
    <text evidence="1">Catalyzes the transfer of a ribosyl phosphate group from 5-phosphoribose 1-diphosphate to orotate, leading to the formation of orotidine monophosphate (OMP).</text>
</comment>
<comment type="catalytic activity">
    <reaction evidence="1">
        <text>orotidine 5'-phosphate + diphosphate = orotate + 5-phospho-alpha-D-ribose 1-diphosphate</text>
        <dbReference type="Rhea" id="RHEA:10380"/>
        <dbReference type="ChEBI" id="CHEBI:30839"/>
        <dbReference type="ChEBI" id="CHEBI:33019"/>
        <dbReference type="ChEBI" id="CHEBI:57538"/>
        <dbReference type="ChEBI" id="CHEBI:58017"/>
        <dbReference type="EC" id="2.4.2.10"/>
    </reaction>
</comment>
<comment type="cofactor">
    <cofactor evidence="1">
        <name>Mg(2+)</name>
        <dbReference type="ChEBI" id="CHEBI:18420"/>
    </cofactor>
</comment>
<comment type="pathway">
    <text evidence="1">Pyrimidine metabolism; UMP biosynthesis via de novo pathway; UMP from orotate: step 1/2.</text>
</comment>
<comment type="subunit">
    <text evidence="1">Homodimer.</text>
</comment>
<comment type="similarity">
    <text evidence="1">Belongs to the purine/pyrimidine phosphoribosyltransferase family. PyrE subfamily.</text>
</comment>
<keyword id="KW-0328">Glycosyltransferase</keyword>
<keyword id="KW-0460">Magnesium</keyword>
<keyword id="KW-0665">Pyrimidine biosynthesis</keyword>
<keyword id="KW-0808">Transferase</keyword>
<sequence length="166" mass="18203">MLKEDLINSGAIKFGDFVLTSGKRSGYYIDIKSAYTDPKILDEIGLEISGMVKSGKIAGMELGSVPILVSVSIKTKRPFVIIRKDDLKHGTRKRYIGSINLNEEIDIIDDVATTGGSIMKAAEIIRNNGGIVKRAICVVDREEGAAEMLKENNIELYSIIKASELR</sequence>
<dbReference type="EC" id="2.4.2.10" evidence="1"/>
<dbReference type="EMBL" id="AE017261">
    <property type="protein sequence ID" value="AAT42793.1"/>
    <property type="molecule type" value="Genomic_DNA"/>
</dbReference>
<dbReference type="RefSeq" id="WP_011177009.1">
    <property type="nucleotide sequence ID" value="NC_005877.1"/>
</dbReference>
<dbReference type="SMR" id="Q6L2K9"/>
<dbReference type="FunCoup" id="Q6L2K9">
    <property type="interactions" value="104"/>
</dbReference>
<dbReference type="STRING" id="263820.PTO0208"/>
<dbReference type="PaxDb" id="263820-PTO0208"/>
<dbReference type="GeneID" id="2844033"/>
<dbReference type="KEGG" id="pto:PTO0208"/>
<dbReference type="PATRIC" id="fig|263820.9.peg.226"/>
<dbReference type="eggNOG" id="arCOG00029">
    <property type="taxonomic scope" value="Archaea"/>
</dbReference>
<dbReference type="HOGENOM" id="CLU_074878_2_0_2"/>
<dbReference type="InParanoid" id="Q6L2K9"/>
<dbReference type="OrthoDB" id="9089at2157"/>
<dbReference type="UniPathway" id="UPA00070">
    <property type="reaction ID" value="UER00119"/>
</dbReference>
<dbReference type="Proteomes" id="UP000000438">
    <property type="component" value="Chromosome"/>
</dbReference>
<dbReference type="GO" id="GO:0000287">
    <property type="term" value="F:magnesium ion binding"/>
    <property type="evidence" value="ECO:0007669"/>
    <property type="project" value="UniProtKB-UniRule"/>
</dbReference>
<dbReference type="GO" id="GO:0004588">
    <property type="term" value="F:orotate phosphoribosyltransferase activity"/>
    <property type="evidence" value="ECO:0007669"/>
    <property type="project" value="UniProtKB-UniRule"/>
</dbReference>
<dbReference type="GO" id="GO:0044205">
    <property type="term" value="P:'de novo' UMP biosynthetic process"/>
    <property type="evidence" value="ECO:0007669"/>
    <property type="project" value="UniProtKB-UniRule"/>
</dbReference>
<dbReference type="GO" id="GO:0019856">
    <property type="term" value="P:pyrimidine nucleobase biosynthetic process"/>
    <property type="evidence" value="ECO:0007669"/>
    <property type="project" value="TreeGrafter"/>
</dbReference>
<dbReference type="CDD" id="cd06223">
    <property type="entry name" value="PRTases_typeI"/>
    <property type="match status" value="1"/>
</dbReference>
<dbReference type="Gene3D" id="3.40.50.2020">
    <property type="match status" value="1"/>
</dbReference>
<dbReference type="HAMAP" id="MF_01208">
    <property type="entry name" value="PyrE"/>
    <property type="match status" value="1"/>
</dbReference>
<dbReference type="InterPro" id="IPR023031">
    <property type="entry name" value="OPRT"/>
</dbReference>
<dbReference type="InterPro" id="IPR004467">
    <property type="entry name" value="Or_phspho_trans_dom"/>
</dbReference>
<dbReference type="InterPro" id="IPR000836">
    <property type="entry name" value="PRibTrfase_dom"/>
</dbReference>
<dbReference type="InterPro" id="IPR029057">
    <property type="entry name" value="PRTase-like"/>
</dbReference>
<dbReference type="NCBIfam" id="TIGR00336">
    <property type="entry name" value="pyrE"/>
    <property type="match status" value="1"/>
</dbReference>
<dbReference type="PANTHER" id="PTHR19278">
    <property type="entry name" value="OROTATE PHOSPHORIBOSYLTRANSFERASE"/>
    <property type="match status" value="1"/>
</dbReference>
<dbReference type="PANTHER" id="PTHR19278:SF9">
    <property type="entry name" value="URIDINE 5'-MONOPHOSPHATE SYNTHASE"/>
    <property type="match status" value="1"/>
</dbReference>
<dbReference type="SUPFAM" id="SSF53271">
    <property type="entry name" value="PRTase-like"/>
    <property type="match status" value="1"/>
</dbReference>
<evidence type="ECO:0000255" key="1">
    <source>
        <dbReference type="HAMAP-Rule" id="MF_01208"/>
    </source>
</evidence>
<gene>
    <name evidence="1" type="primary">pyrE</name>
    <name type="ordered locus">PTO0208</name>
</gene>
<proteinExistence type="inferred from homology"/>
<feature type="chain" id="PRO_0000298887" description="Orotate phosphoribosyltransferase">
    <location>
        <begin position="1"/>
        <end position="166"/>
    </location>
</feature>
<feature type="binding site" evidence="1">
    <location>
        <position position="83"/>
    </location>
    <ligand>
        <name>5-phospho-alpha-D-ribose 1-diphosphate</name>
        <dbReference type="ChEBI" id="CHEBI:58017"/>
        <note>ligand shared between dimeric partners</note>
    </ligand>
</feature>
<feature type="binding site" description="in other chain" evidence="1">
    <location>
        <position position="84"/>
    </location>
    <ligand>
        <name>5-phospho-alpha-D-ribose 1-diphosphate</name>
        <dbReference type="ChEBI" id="CHEBI:58017"/>
        <note>ligand shared between dimeric partners</note>
    </ligand>
</feature>
<feature type="binding site" evidence="1">
    <location>
        <position position="89"/>
    </location>
    <ligand>
        <name>5-phospho-alpha-D-ribose 1-diphosphate</name>
        <dbReference type="ChEBI" id="CHEBI:58017"/>
        <note>ligand shared between dimeric partners</note>
    </ligand>
</feature>
<feature type="binding site" description="in other chain" evidence="1">
    <location>
        <begin position="109"/>
        <end position="117"/>
    </location>
    <ligand>
        <name>5-phospho-alpha-D-ribose 1-diphosphate</name>
        <dbReference type="ChEBI" id="CHEBI:58017"/>
        <note>ligand shared between dimeric partners</note>
    </ligand>
</feature>
<feature type="binding site" evidence="1">
    <location>
        <position position="113"/>
    </location>
    <ligand>
        <name>orotate</name>
        <dbReference type="ChEBI" id="CHEBI:30839"/>
    </ligand>
</feature>
<feature type="binding site" evidence="1">
    <location>
        <position position="141"/>
    </location>
    <ligand>
        <name>orotate</name>
        <dbReference type="ChEBI" id="CHEBI:30839"/>
    </ligand>
</feature>